<organism>
    <name type="scientific">Saccharophagus degradans (strain 2-40 / ATCC 43961 / DSM 17024)</name>
    <dbReference type="NCBI Taxonomy" id="203122"/>
    <lineage>
        <taxon>Bacteria</taxon>
        <taxon>Pseudomonadati</taxon>
        <taxon>Pseudomonadota</taxon>
        <taxon>Gammaproteobacteria</taxon>
        <taxon>Cellvibrionales</taxon>
        <taxon>Cellvibrionaceae</taxon>
        <taxon>Saccharophagus</taxon>
    </lineage>
</organism>
<feature type="chain" id="PRO_1000023412" description="Translational regulator CsrA">
    <location>
        <begin position="1"/>
        <end position="64"/>
    </location>
</feature>
<name>CSRA_SACD2</name>
<accession>Q21L66</accession>
<reference key="1">
    <citation type="journal article" date="2008" name="PLoS Genet.">
        <title>Complete genome sequence of the complex carbohydrate-degrading marine bacterium, Saccharophagus degradans strain 2-40 T.</title>
        <authorList>
            <person name="Weiner R.M."/>
            <person name="Taylor L.E. II"/>
            <person name="Henrissat B."/>
            <person name="Hauser L."/>
            <person name="Land M."/>
            <person name="Coutinho P.M."/>
            <person name="Rancurel C."/>
            <person name="Saunders E.H."/>
            <person name="Longmire A.G."/>
            <person name="Zhang H."/>
            <person name="Bayer E.A."/>
            <person name="Gilbert H.J."/>
            <person name="Larimer F."/>
            <person name="Zhulin I.B."/>
            <person name="Ekborg N.A."/>
            <person name="Lamed R."/>
            <person name="Richardson P.M."/>
            <person name="Borovok I."/>
            <person name="Hutcheson S."/>
        </authorList>
    </citation>
    <scope>NUCLEOTIDE SEQUENCE [LARGE SCALE GENOMIC DNA]</scope>
    <source>
        <strain>2-40 / ATCC 43961 / DSM 17024</strain>
    </source>
</reference>
<sequence>MLILTRRIGETLMVGDEVTVTVLGVKGNQVRIGVNAPKEIAVHREEIYQRIQREKQEQGEPGNS</sequence>
<evidence type="ECO:0000255" key="1">
    <source>
        <dbReference type="HAMAP-Rule" id="MF_00167"/>
    </source>
</evidence>
<comment type="function">
    <text evidence="1">A key translational regulator that binds mRNA to regulate translation initiation and/or mRNA stability. Mediates global changes in gene expression, shifting from rapid growth to stress survival by linking envelope stress, the stringent response and the catabolite repression systems. Usually binds in the 5'-UTR; binding at or near the Shine-Dalgarno sequence prevents ribosome-binding, repressing translation, binding elsewhere in the 5'-UTR can activate translation and/or stabilize the mRNA. Its function is antagonized by small RNA(s).</text>
</comment>
<comment type="subunit">
    <text evidence="1">Homodimer; the beta-strands of each monomer intercalate to form a hydrophobic core, while the alpha-helices form wings that extend away from the core.</text>
</comment>
<comment type="subcellular location">
    <subcellularLocation>
        <location evidence="1">Cytoplasm</location>
    </subcellularLocation>
</comment>
<comment type="similarity">
    <text evidence="1">Belongs to the CsrA/RsmA family.</text>
</comment>
<gene>
    <name evidence="1" type="primary">csrA</name>
    <name type="ordered locus">Sde_1301</name>
</gene>
<dbReference type="EMBL" id="CP000282">
    <property type="protein sequence ID" value="ABD80563.1"/>
    <property type="molecule type" value="Genomic_DNA"/>
</dbReference>
<dbReference type="RefSeq" id="WP_011467783.1">
    <property type="nucleotide sequence ID" value="NC_007912.1"/>
</dbReference>
<dbReference type="SMR" id="Q21L66"/>
<dbReference type="STRING" id="203122.Sde_1301"/>
<dbReference type="GeneID" id="98612976"/>
<dbReference type="KEGG" id="sde:Sde_1301"/>
<dbReference type="eggNOG" id="COG1551">
    <property type="taxonomic scope" value="Bacteria"/>
</dbReference>
<dbReference type="HOGENOM" id="CLU_164837_2_1_6"/>
<dbReference type="OrthoDB" id="9809061at2"/>
<dbReference type="Proteomes" id="UP000001947">
    <property type="component" value="Chromosome"/>
</dbReference>
<dbReference type="GO" id="GO:0005829">
    <property type="term" value="C:cytosol"/>
    <property type="evidence" value="ECO:0007669"/>
    <property type="project" value="TreeGrafter"/>
</dbReference>
<dbReference type="GO" id="GO:0048027">
    <property type="term" value="F:mRNA 5'-UTR binding"/>
    <property type="evidence" value="ECO:0007669"/>
    <property type="project" value="UniProtKB-UniRule"/>
</dbReference>
<dbReference type="GO" id="GO:0006402">
    <property type="term" value="P:mRNA catabolic process"/>
    <property type="evidence" value="ECO:0007669"/>
    <property type="project" value="InterPro"/>
</dbReference>
<dbReference type="GO" id="GO:0045947">
    <property type="term" value="P:negative regulation of translational initiation"/>
    <property type="evidence" value="ECO:0007669"/>
    <property type="project" value="UniProtKB-UniRule"/>
</dbReference>
<dbReference type="GO" id="GO:0045948">
    <property type="term" value="P:positive regulation of translational initiation"/>
    <property type="evidence" value="ECO:0007669"/>
    <property type="project" value="UniProtKB-UniRule"/>
</dbReference>
<dbReference type="GO" id="GO:0006109">
    <property type="term" value="P:regulation of carbohydrate metabolic process"/>
    <property type="evidence" value="ECO:0007669"/>
    <property type="project" value="UniProtKB-UniRule"/>
</dbReference>
<dbReference type="FunFam" id="2.60.40.4380:FF:000001">
    <property type="entry name" value="Translational regulator CsrA"/>
    <property type="match status" value="1"/>
</dbReference>
<dbReference type="Gene3D" id="2.60.40.4380">
    <property type="entry name" value="Translational regulator CsrA"/>
    <property type="match status" value="1"/>
</dbReference>
<dbReference type="HAMAP" id="MF_00167">
    <property type="entry name" value="CsrA"/>
    <property type="match status" value="1"/>
</dbReference>
<dbReference type="InterPro" id="IPR003751">
    <property type="entry name" value="CsrA"/>
</dbReference>
<dbReference type="InterPro" id="IPR036107">
    <property type="entry name" value="CsrA_sf"/>
</dbReference>
<dbReference type="NCBIfam" id="TIGR00202">
    <property type="entry name" value="csrA"/>
    <property type="match status" value="1"/>
</dbReference>
<dbReference type="NCBIfam" id="NF002469">
    <property type="entry name" value="PRK01712.1"/>
    <property type="match status" value="1"/>
</dbReference>
<dbReference type="PANTHER" id="PTHR34984">
    <property type="entry name" value="CARBON STORAGE REGULATOR"/>
    <property type="match status" value="1"/>
</dbReference>
<dbReference type="PANTHER" id="PTHR34984:SF1">
    <property type="entry name" value="CARBON STORAGE REGULATOR"/>
    <property type="match status" value="1"/>
</dbReference>
<dbReference type="Pfam" id="PF02599">
    <property type="entry name" value="CsrA"/>
    <property type="match status" value="1"/>
</dbReference>
<dbReference type="SUPFAM" id="SSF117130">
    <property type="entry name" value="CsrA-like"/>
    <property type="match status" value="1"/>
</dbReference>
<proteinExistence type="inferred from homology"/>
<keyword id="KW-0010">Activator</keyword>
<keyword id="KW-0963">Cytoplasm</keyword>
<keyword id="KW-1185">Reference proteome</keyword>
<keyword id="KW-0678">Repressor</keyword>
<keyword id="KW-0694">RNA-binding</keyword>
<keyword id="KW-0810">Translation regulation</keyword>
<protein>
    <recommendedName>
        <fullName evidence="1">Translational regulator CsrA</fullName>
    </recommendedName>
    <alternativeName>
        <fullName evidence="1">Carbon storage regulator</fullName>
    </alternativeName>
</protein>